<keyword id="KW-0002">3D-structure</keyword>
<keyword id="KW-0007">Acetylation</keyword>
<keyword id="KW-0025">Alternative splicing</keyword>
<keyword id="KW-0131">Cell cycle</keyword>
<keyword id="KW-0132">Cell division</keyword>
<keyword id="KW-0963">Cytoplasm</keyword>
<keyword id="KW-0206">Cytoskeleton</keyword>
<keyword id="KW-0991">Intellectual disability</keyword>
<keyword id="KW-0498">Mitosis</keyword>
<keyword id="KW-0539">Nucleus</keyword>
<keyword id="KW-1267">Proteomics identification</keyword>
<keyword id="KW-1185">Reference proteome</keyword>
<keyword id="KW-0677">Repeat</keyword>
<keyword id="KW-0802">TPR repeat</keyword>
<keyword id="KW-0833">Ubl conjugation pathway</keyword>
<name>APC7_HUMAN</name>
<proteinExistence type="evidence at protein level"/>
<accession>Q9UJX3</accession>
<accession>Q96AC4</accession>
<accession>Q96GF4</accession>
<accession>Q9BU24</accession>
<accession>Q9NT16</accession>
<reference key="1">
    <citation type="journal article" date="1998" name="Science">
        <title>Identification of a cullin homology region in a subunit of the anaphase-promoting complex.</title>
        <authorList>
            <person name="Yu H."/>
            <person name="Peters J.-M."/>
            <person name="King R.W."/>
            <person name="Page A.M."/>
            <person name="Hieter P."/>
            <person name="Kirschner M.W."/>
        </authorList>
    </citation>
    <scope>NUCLEOTIDE SEQUENCE [MRNA] (ISOFORM 1)</scope>
    <scope>SUBUNIT</scope>
</reference>
<reference key="2">
    <citation type="journal article" date="2004" name="Genome Res.">
        <title>The status, quality, and expansion of the NIH full-length cDNA project: the Mammalian Gene Collection (MGC).</title>
        <authorList>
            <consortium name="The MGC Project Team"/>
        </authorList>
    </citation>
    <scope>NUCLEOTIDE SEQUENCE [LARGE SCALE MRNA] OF 110-565 (ISOFORM 1)</scope>
    <source>
        <tissue>Ovary</tissue>
        <tissue>Skin</tissue>
    </source>
</reference>
<reference key="3">
    <citation type="journal article" date="2007" name="BMC Genomics">
        <title>The full-ORF clone resource of the German cDNA consortium.</title>
        <authorList>
            <person name="Bechtel S."/>
            <person name="Rosenfelder H."/>
            <person name="Duda A."/>
            <person name="Schmidt C.P."/>
            <person name="Ernst U."/>
            <person name="Wellenreuther R."/>
            <person name="Mehrle A."/>
            <person name="Schuster C."/>
            <person name="Bahr A."/>
            <person name="Bloecker H."/>
            <person name="Heubner D."/>
            <person name="Hoerlein A."/>
            <person name="Michel G."/>
            <person name="Wedler H."/>
            <person name="Koehrer K."/>
            <person name="Ottenwaelder B."/>
            <person name="Poustka A."/>
            <person name="Wiemann S."/>
            <person name="Schupp I."/>
        </authorList>
    </citation>
    <scope>NUCLEOTIDE SEQUENCE [LARGE SCALE MRNA] OF 282-565 (ISOFORM 2)</scope>
    <source>
        <tissue>Testis</tissue>
    </source>
</reference>
<reference key="4">
    <citation type="journal article" date="2008" name="Cell">
        <title>Mechanism of ubiquitin-chain formation by the human anaphase-promoting complex.</title>
        <authorList>
            <person name="Jin L."/>
            <person name="Williamson A."/>
            <person name="Banerjee S."/>
            <person name="Philipp I."/>
            <person name="Rape M."/>
        </authorList>
    </citation>
    <scope>FUNCTION OF THE APC/C</scope>
</reference>
<reference key="5">
    <citation type="journal article" date="2008" name="J. Cell Sci.">
        <title>EML3 is a nuclear microtubule-binding protein required for the correct alignment of chromosomes in metaphase.</title>
        <authorList>
            <person name="Tegha-Dunghu J."/>
            <person name="Neumann B."/>
            <person name="Reber S."/>
            <person name="Krause R."/>
            <person name="Erfle H."/>
            <person name="Walter T."/>
            <person name="Held M."/>
            <person name="Rogers P."/>
            <person name="Hupfeld K."/>
            <person name="Ruppert T."/>
            <person name="Ellenberg J."/>
            <person name="Gruss O.J."/>
        </authorList>
    </citation>
    <scope>SUBCELLULAR LOCATION</scope>
</reference>
<reference key="6">
    <citation type="journal article" date="2008" name="Proc. Natl. Acad. Sci. U.S.A.">
        <title>A quantitative atlas of mitotic phosphorylation.</title>
        <authorList>
            <person name="Dephoure N."/>
            <person name="Zhou C."/>
            <person name="Villen J."/>
            <person name="Beausoleil S.A."/>
            <person name="Bakalarski C.E."/>
            <person name="Elledge S.J."/>
            <person name="Gygi S.P."/>
        </authorList>
    </citation>
    <scope>IDENTIFICATION BY MASS SPECTROMETRY [LARGE SCALE ANALYSIS]</scope>
    <source>
        <tissue>Cervix carcinoma</tissue>
    </source>
</reference>
<reference key="7">
    <citation type="journal article" date="2009" name="Science">
        <title>Lysine acetylation targets protein complexes and co-regulates major cellular functions.</title>
        <authorList>
            <person name="Choudhary C."/>
            <person name="Kumar C."/>
            <person name="Gnad F."/>
            <person name="Nielsen M.L."/>
            <person name="Rehman M."/>
            <person name="Walther T.C."/>
            <person name="Olsen J.V."/>
            <person name="Mann M."/>
        </authorList>
    </citation>
    <scope>IDENTIFICATION BY MASS SPECTROMETRY [LARGE SCALE ANALYSIS]</scope>
</reference>
<reference key="8">
    <citation type="journal article" date="2011" name="BMC Syst. Biol.">
        <title>Initial characterization of the human central proteome.</title>
        <authorList>
            <person name="Burkard T.R."/>
            <person name="Planyavsky M."/>
            <person name="Kaupe I."/>
            <person name="Breitwieser F.P."/>
            <person name="Buerckstuemmer T."/>
            <person name="Bennett K.L."/>
            <person name="Superti-Furga G."/>
            <person name="Colinge J."/>
        </authorList>
    </citation>
    <scope>IDENTIFICATION BY MASS SPECTROMETRY [LARGE SCALE ANALYSIS]</scope>
</reference>
<reference key="9">
    <citation type="journal article" date="2013" name="J. Proteome Res.">
        <title>Toward a comprehensive characterization of a human cancer cell phosphoproteome.</title>
        <authorList>
            <person name="Zhou H."/>
            <person name="Di Palma S."/>
            <person name="Preisinger C."/>
            <person name="Peng M."/>
            <person name="Polat A.N."/>
            <person name="Heck A.J."/>
            <person name="Mohammed S."/>
        </authorList>
    </citation>
    <scope>IDENTIFICATION BY MASS SPECTROMETRY [LARGE SCALE ANALYSIS]</scope>
    <source>
        <tissue>Erythroleukemia</tissue>
    </source>
</reference>
<reference key="10">
    <citation type="journal article" date="2017" name="Cell">
        <title>Assembly and function of heterotypic ubiquitin chains in cell-cycle and protein quality control.</title>
        <authorList>
            <person name="Yau R.G."/>
            <person name="Doerner K."/>
            <person name="Castellanos E.R."/>
            <person name="Haakonsen D.L."/>
            <person name="Werner A."/>
            <person name="Wang N."/>
            <person name="Yang X.W."/>
            <person name="Martinez-Martin N."/>
            <person name="Matsumoto M.L."/>
            <person name="Dixit V.M."/>
            <person name="Rape M."/>
        </authorList>
    </citation>
    <scope>FUNCTION</scope>
    <scope>PATHWAY</scope>
</reference>
<reference key="11">
    <citation type="journal article" date="2022" name="Mol. Cell">
        <title>APC7 mediates ubiquitin signaling in constitutive heterochromatin in the developing mammalian brain.</title>
        <authorList>
            <person name="Ferguson C.J."/>
            <person name="Urso O."/>
            <person name="Bodrug T."/>
            <person name="Gassaway B.M."/>
            <person name="Watson E.R."/>
            <person name="Prabu J.R."/>
            <person name="Lara-Gonzalez P."/>
            <person name="Martinez-Chacin R.C."/>
            <person name="Wu D.Y."/>
            <person name="Brigatti K.W."/>
            <person name="Puffenberger E.G."/>
            <person name="Taylor C.M."/>
            <person name="Haas-Givler B."/>
            <person name="Jinks R.N."/>
            <person name="Strauss K.A."/>
            <person name="Desai A."/>
            <person name="Gabel H.W."/>
            <person name="Gygi S.P."/>
            <person name="Schulman B.A."/>
            <person name="Brown N.G."/>
            <person name="Bonni A."/>
        </authorList>
    </citation>
    <scope>INVOLVEMENT IN FERBON</scope>
    <scope>FUNCTION</scope>
</reference>
<reference key="12">
    <citation type="journal article" date="2005" name="Mol. Cell">
        <title>Localization of the coactivator Cdh1 and the cullin subunit Apc2 in a cryo-electron microscopy model of vertebrate APC/C.</title>
        <authorList>
            <person name="Dube P."/>
            <person name="Herzog F."/>
            <person name="Gieffers C."/>
            <person name="Sander B."/>
            <person name="Riedel D."/>
            <person name="Mueller S.A."/>
            <person name="Engel A."/>
            <person name="Peters J.-M."/>
            <person name="Stark H."/>
        </authorList>
    </citation>
    <scope>ELECTRON MICROSCOPY OF THE APC/C</scope>
</reference>
<reference key="13">
    <citation type="journal article" date="2009" name="J. Biol. Chem.">
        <title>Crystal structure of the N-terminal domain of anaphase-promoting complex subunit 7.</title>
        <authorList>
            <person name="Han D."/>
            <person name="Kim K."/>
            <person name="Kim Y."/>
            <person name="Kang Y."/>
            <person name="Lee J.Y."/>
            <person name="Kim Y."/>
        </authorList>
    </citation>
    <scope>X-RAY CRYSTALLOGRAPHY (2.5 ANGSTROMS) OF 1-147</scope>
    <scope>HOMODIMERIZATION</scope>
    <scope>TPR REPEATS</scope>
    <scope>MUTAGENESIS OF LEU-22 AND LEU-26</scope>
</reference>
<reference key="14">
    <citation type="journal article" date="2014" name="Nature">
        <title>Molecular architecture and mechanism of the anaphase-promoting complex.</title>
        <authorList>
            <person name="Chang L."/>
            <person name="Zhang Z."/>
            <person name="Yang J."/>
            <person name="McLaughlin S.H."/>
            <person name="Barford D."/>
        </authorList>
    </citation>
    <scope>STRUCTURE BY ELECTRON MICROSCOPY (7.4 ANGSTROMS) OF THE APC/C</scope>
    <scope>SUBUNIT</scope>
</reference>
<reference evidence="14 15" key="15">
    <citation type="journal article" date="2015" name="Nature">
        <title>Atomic structure of the APC/C and its mechanism of protein ubiquitination.</title>
        <authorList>
            <person name="Chang L."/>
            <person name="Zhang Z."/>
            <person name="Yang J."/>
            <person name="McLaughlin S.H."/>
            <person name="Barford D."/>
        </authorList>
    </citation>
    <scope>STRUCTURE BY ELECTRON MICROSCOPY (3.60 ANGSTROMS) OF 1-506 OF APC/C</scope>
    <scope>SUBUNIT</scope>
</reference>
<evidence type="ECO:0000250" key="1">
    <source>
        <dbReference type="UniProtKB" id="Q9WVM3"/>
    </source>
</evidence>
<evidence type="ECO:0000256" key="2">
    <source>
        <dbReference type="SAM" id="MobiDB-lite"/>
    </source>
</evidence>
<evidence type="ECO:0000269" key="3">
    <source>
    </source>
</evidence>
<evidence type="ECO:0000269" key="4">
    <source>
    </source>
</evidence>
<evidence type="ECO:0000269" key="5">
    <source>
    </source>
</evidence>
<evidence type="ECO:0000269" key="6">
    <source>
    </source>
</evidence>
<evidence type="ECO:0000269" key="7">
    <source>
    </source>
</evidence>
<evidence type="ECO:0000269" key="8">
    <source>
    </source>
</evidence>
<evidence type="ECO:0000269" key="9">
    <source>
    </source>
</evidence>
<evidence type="ECO:0000269" key="10">
    <source>
    </source>
</evidence>
<evidence type="ECO:0000303" key="11">
    <source>
    </source>
</evidence>
<evidence type="ECO:0000305" key="12"/>
<evidence type="ECO:0000312" key="13">
    <source>
        <dbReference type="HGNC" id="HGNC:17380"/>
    </source>
</evidence>
<evidence type="ECO:0007744" key="14">
    <source>
        <dbReference type="PDB" id="4UI9"/>
    </source>
</evidence>
<evidence type="ECO:0007744" key="15">
    <source>
        <dbReference type="PDB" id="5A31"/>
    </source>
</evidence>
<evidence type="ECO:0007829" key="16">
    <source>
        <dbReference type="PDB" id="3FFL"/>
    </source>
</evidence>
<evidence type="ECO:0007829" key="17">
    <source>
        <dbReference type="PDB" id="6Q6G"/>
    </source>
</evidence>
<evidence type="ECO:0007829" key="18">
    <source>
        <dbReference type="PDB" id="8TAU"/>
    </source>
</evidence>
<evidence type="ECO:0007829" key="19">
    <source>
        <dbReference type="PDB" id="9GAW"/>
    </source>
</evidence>
<organism>
    <name type="scientific">Homo sapiens</name>
    <name type="common">Human</name>
    <dbReference type="NCBI Taxonomy" id="9606"/>
    <lineage>
        <taxon>Eukaryota</taxon>
        <taxon>Metazoa</taxon>
        <taxon>Chordata</taxon>
        <taxon>Craniata</taxon>
        <taxon>Vertebrata</taxon>
        <taxon>Euteleostomi</taxon>
        <taxon>Mammalia</taxon>
        <taxon>Eutheria</taxon>
        <taxon>Euarchontoglires</taxon>
        <taxon>Primates</taxon>
        <taxon>Haplorrhini</taxon>
        <taxon>Catarrhini</taxon>
        <taxon>Hominidae</taxon>
        <taxon>Homo</taxon>
    </lineage>
</organism>
<comment type="function">
    <text evidence="4 8 9">Component of the anaphase promoting complex/cyclosome (APC/C), a cell cycle-regulated E3 ubiquitin ligase that controls progression through mitosis and the G1 phase of the cell cycle (PubMed:18485873). The APC/C complex acts by mediating ubiquitination and subsequent degradation of target proteins: it mainly mediates the formation of 'Lys-11'-linked polyubiquitin chains and, to a lower extent, the formation of 'Lys-48'- and 'Lys-63'-linked polyubiquitin chains (PubMed:18485873). The APC/C complex catalyzes assembly of branched 'Lys-11'-/'Lys-48'-linked branched ubiquitin chains on target proteins (PubMed:29033132). APC7 is not required for the assembly of the APC/C complex, but has an enzyme-substrate adapter activity mediating the processive ubiquitination of specific substrates (PubMed:34942119). Involved in brain development through the specific ubiquitination and clearance of MKI67 from constitutive heterochromatin after neuronal progenitors exit mitosis (PubMed:34942119).</text>
</comment>
<comment type="pathway">
    <text evidence="8">Protein modification; protein ubiquitination.</text>
</comment>
<comment type="subunit">
    <text evidence="6 7 10">V-shaped homodimer. The mammalian APC/C is composed at least of 14 distinct subunits ANAPC1, ANAPC2, CDC27/APC3, ANAPC4, ANAPC5, CDC16/APC6, ANAPC7, CDC23/APC8, ANAPC10, ANAPC11, CDC26/APC12, ANAPC13, ANAPC15 and ANAPC16 that assemble into a complex of at least 19 chains with a combined molecular mass of around 1.2 MDa; APC/C interacts with FZR1 and FBXO5 (PubMed:25043029, PubMed:26083744).</text>
</comment>
<comment type="subcellular location">
    <subcellularLocation>
        <location evidence="3">Cytoplasm</location>
        <location evidence="3">Cytoskeleton</location>
    </subcellularLocation>
    <subcellularLocation>
        <location evidence="3">Nucleus</location>
    </subcellularLocation>
    <subcellularLocation>
        <location evidence="3">Cytoplasm</location>
        <location evidence="3">Cytoskeleton</location>
        <location evidence="3">Spindle</location>
    </subcellularLocation>
    <text evidence="3">Localizes to spindle during metaphase and to cytoplasmic microtubules during interphase.</text>
</comment>
<comment type="alternative products">
    <event type="alternative splicing"/>
    <isoform>
        <id>Q9UJX3-1</id>
        <name>1</name>
        <sequence type="displayed"/>
    </isoform>
    <isoform>
        <id>Q9UJX3-2</id>
        <name>2</name>
        <sequence type="described" ref="VSP_039043"/>
    </isoform>
</comment>
<comment type="disease" evidence="9">
    <disease id="DI-06315">
        <name>Ferguson-Bonni neurodevelopmental syndrome</name>
        <acronym>FERBON</acronym>
        <description>An autosomal recessive disorder characterized by global developmental delay, impaired intellectual development, and hypotonia with early motor delay. Additional features may include dysmorphic facies, mild skeletal abnormalities, and hearing loss.</description>
        <dbReference type="MIM" id="619699"/>
    </disease>
    <text>The disease is caused by variants affecting the gene represented in this entry.</text>
</comment>
<comment type="similarity">
    <text evidence="12">Belongs to the APC7 family.</text>
</comment>
<comment type="sequence caution" evidence="12">
    <conflict type="erroneous initiation">
        <sequence resource="EMBL-CDS" id="AAF05754"/>
    </conflict>
    <text>Extended N-terminus.</text>
</comment>
<comment type="sequence caution" evidence="12">
    <conflict type="erroneous translation">
        <sequence resource="EMBL-CDS" id="AAH17316"/>
    </conflict>
    <text>Wrong choice of frame.</text>
</comment>
<sequence length="565" mass="63133">MNVIDHVRDMAAAGLHSNVRLLSSLLLTMSNNNPELFSPPQKYQLLVYHADSLFHDKEYRNAVSKYTMALQQKKALSKTSKVRPSTGNSASTPQSQCLPSEIEVKYKMAECYTMLKQDKDAIAILDGIPSRQRTPKINMMLANLYKKAGQERPSVTSYKEVLRQCPLALDAILGLLSLSVKGAEVASMTMNVIQTVPNLDWLSVWIKAYAFVHTGDNSRAISTICSLEKKSLLRDNVDLLGSLADLYFRAGDNKNSVLKFEQAQMLDPYLIKGMDVYGYLLAREGRLEDVENLGCRLFNISDQHAEPWVVSGCHSFYSKRYSRALYLGAKAIQLNSNSVQALLLKGAALRNMGRVQEAIIHFREAIRLAPCRLDCYEGLIECYLASNSIREAMVMANNVYKTLGANAQTLTLLATVCLEDPVTQEKAKTLLDKALTQRPDYIKAVVKKAELLSREQKYEDGIALLRNALANQSDCVLHRILGDFLVAVNEYQEAMDQYSIALSLDPNDQKSLEGMQKMEKEESPTDATQEEDVDDMEGSGEEGDLEGSDSEAAQWADQEQWFGMQ</sequence>
<gene>
    <name evidence="13" type="primary">ANAPC7</name>
    <name type="synonym">APC7</name>
</gene>
<feature type="chain" id="PRO_0000106261" description="Anaphase-promoting complex subunit 7">
    <location>
        <begin position="1"/>
        <end position="565"/>
    </location>
</feature>
<feature type="repeat" description="TPR 1">
    <location>
        <begin position="101"/>
        <end position="134"/>
    </location>
</feature>
<feature type="repeat" description="TPR 2">
    <location>
        <begin position="169"/>
        <end position="202"/>
    </location>
</feature>
<feature type="repeat" description="TPR 3">
    <location>
        <begin position="203"/>
        <end position="236"/>
    </location>
</feature>
<feature type="repeat" description="TPR 4">
    <location>
        <begin position="237"/>
        <end position="270"/>
    </location>
</feature>
<feature type="repeat" description="TPR 5">
    <location>
        <begin position="339"/>
        <end position="372"/>
    </location>
</feature>
<feature type="repeat" description="TPR 6">
    <location>
        <begin position="373"/>
        <end position="406"/>
    </location>
</feature>
<feature type="repeat" description="TPR 7">
    <location>
        <begin position="407"/>
        <end position="441"/>
    </location>
</feature>
<feature type="repeat" description="TPR 8">
    <location>
        <begin position="442"/>
        <end position="474"/>
    </location>
</feature>
<feature type="repeat" description="TPR 9">
    <location>
        <begin position="475"/>
        <end position="508"/>
    </location>
</feature>
<feature type="repeat" description="TPR 10">
    <location>
        <begin position="509"/>
        <end position="531"/>
    </location>
</feature>
<feature type="region of interest" description="Disordered" evidence="2">
    <location>
        <begin position="513"/>
        <end position="565"/>
    </location>
</feature>
<feature type="compositionally biased region" description="Basic and acidic residues" evidence="2">
    <location>
        <begin position="513"/>
        <end position="523"/>
    </location>
</feature>
<feature type="compositionally biased region" description="Acidic residues" evidence="2">
    <location>
        <begin position="528"/>
        <end position="549"/>
    </location>
</feature>
<feature type="modified residue" description="N6-acetyllysine" evidence="1">
    <location>
        <position position="229"/>
    </location>
</feature>
<feature type="splice variant" id="VSP_039043" description="In isoform 2." evidence="11">
    <original>SLDPNDQKSLEGMQKMEKEESPTDATQEEDVDDMEGSGEEGDLEGSDSEAAQWADQEQWFGMQ</original>
    <variation>R</variation>
    <location>
        <begin position="503"/>
        <end position="565"/>
    </location>
</feature>
<feature type="mutagenesis site" description="Loss of homodimerization; when associated with K-26." evidence="5">
    <original>L</original>
    <variation>R</variation>
    <location>
        <position position="22"/>
    </location>
</feature>
<feature type="mutagenesis site" description="Loss of homodimerization; when associated with R-22." evidence="5">
    <original>L</original>
    <variation>K</variation>
    <location>
        <position position="26"/>
    </location>
</feature>
<feature type="sequence conflict" description="In Ref. 1; AAF05754." evidence="12" ref="1">
    <original>Q</original>
    <variation>R</variation>
    <location>
        <position position="150"/>
    </location>
</feature>
<feature type="sequence conflict" description="In Ref. 1; AAF05754." evidence="12" ref="1">
    <original>P</original>
    <variation>L</variation>
    <location>
        <position position="268"/>
    </location>
</feature>
<feature type="sequence conflict" description="In Ref. 3; CAB70828." evidence="12" ref="3">
    <original>S</original>
    <variation>R</variation>
    <location>
        <position position="503"/>
    </location>
</feature>
<feature type="helix" evidence="16">
    <location>
        <begin position="3"/>
        <end position="12"/>
    </location>
</feature>
<feature type="helix" evidence="16">
    <location>
        <begin position="16"/>
        <end position="32"/>
    </location>
</feature>
<feature type="strand" evidence="19">
    <location>
        <begin position="35"/>
        <end position="37"/>
    </location>
</feature>
<feature type="helix" evidence="16">
    <location>
        <begin position="39"/>
        <end position="55"/>
    </location>
</feature>
<feature type="helix" evidence="16">
    <location>
        <begin position="59"/>
        <end position="74"/>
    </location>
</feature>
<feature type="helix" evidence="16">
    <location>
        <begin position="101"/>
        <end position="114"/>
    </location>
</feature>
<feature type="helix" evidence="16">
    <location>
        <begin position="118"/>
        <end position="126"/>
    </location>
</feature>
<feature type="helix" evidence="16">
    <location>
        <begin position="130"/>
        <end position="132"/>
    </location>
</feature>
<feature type="helix" evidence="16">
    <location>
        <begin position="135"/>
        <end position="144"/>
    </location>
</feature>
<feature type="helix" evidence="19">
    <location>
        <begin position="152"/>
        <end position="164"/>
    </location>
</feature>
<feature type="helix" evidence="19">
    <location>
        <begin position="169"/>
        <end position="177"/>
    </location>
</feature>
<feature type="helix" evidence="19">
    <location>
        <begin position="182"/>
        <end position="188"/>
    </location>
</feature>
<feature type="helix" evidence="19">
    <location>
        <begin position="190"/>
        <end position="195"/>
    </location>
</feature>
<feature type="strand" evidence="17">
    <location>
        <begin position="196"/>
        <end position="198"/>
    </location>
</feature>
<feature type="helix" evidence="19">
    <location>
        <begin position="202"/>
        <end position="214"/>
    </location>
</feature>
<feature type="helix" evidence="19">
    <location>
        <begin position="217"/>
        <end position="229"/>
    </location>
</feature>
<feature type="strand" evidence="18">
    <location>
        <begin position="230"/>
        <end position="232"/>
    </location>
</feature>
<feature type="helix" evidence="19">
    <location>
        <begin position="237"/>
        <end position="250"/>
    </location>
</feature>
<feature type="helix" evidence="19">
    <location>
        <begin position="255"/>
        <end position="266"/>
    </location>
</feature>
<feature type="helix" evidence="19">
    <location>
        <begin position="274"/>
        <end position="283"/>
    </location>
</feature>
<feature type="helix" evidence="19">
    <location>
        <begin position="287"/>
        <end position="300"/>
    </location>
</feature>
<feature type="strand" evidence="19">
    <location>
        <begin position="302"/>
        <end position="304"/>
    </location>
</feature>
<feature type="helix" evidence="19">
    <location>
        <begin position="305"/>
        <end position="317"/>
    </location>
</feature>
<feature type="helix" evidence="19">
    <location>
        <begin position="321"/>
        <end position="334"/>
    </location>
</feature>
<feature type="helix" evidence="19">
    <location>
        <begin position="339"/>
        <end position="352"/>
    </location>
</feature>
<feature type="helix" evidence="19">
    <location>
        <begin position="355"/>
        <end position="368"/>
    </location>
</feature>
<feature type="helix" evidence="19">
    <location>
        <begin position="373"/>
        <end position="385"/>
    </location>
</feature>
<feature type="helix" evidence="19">
    <location>
        <begin position="389"/>
        <end position="403"/>
    </location>
</feature>
<feature type="helix" evidence="19">
    <location>
        <begin position="407"/>
        <end position="418"/>
    </location>
</feature>
<feature type="helix" evidence="17">
    <location>
        <begin position="421"/>
        <end position="423"/>
    </location>
</feature>
<feature type="helix" evidence="19">
    <location>
        <begin position="424"/>
        <end position="437"/>
    </location>
</feature>
<feature type="helix" evidence="19">
    <location>
        <begin position="442"/>
        <end position="455"/>
    </location>
</feature>
<feature type="helix" evidence="19">
    <location>
        <begin position="459"/>
        <end position="469"/>
    </location>
</feature>
<feature type="helix" evidence="19">
    <location>
        <begin position="475"/>
        <end position="488"/>
    </location>
</feature>
<feature type="helix" evidence="19">
    <location>
        <begin position="491"/>
        <end position="504"/>
    </location>
</feature>
<feature type="helix" evidence="19">
    <location>
        <begin position="509"/>
        <end position="519"/>
    </location>
</feature>
<dbReference type="EMBL" id="AF191340">
    <property type="protein sequence ID" value="AAF05754.1"/>
    <property type="status" value="ALT_INIT"/>
    <property type="molecule type" value="mRNA"/>
</dbReference>
<dbReference type="EMBL" id="BC002941">
    <property type="protein sequence ID" value="AAH02941.2"/>
    <property type="molecule type" value="mRNA"/>
</dbReference>
<dbReference type="EMBL" id="BC009498">
    <property type="protein sequence ID" value="AAH09498.2"/>
    <property type="molecule type" value="mRNA"/>
</dbReference>
<dbReference type="EMBL" id="BC017316">
    <property type="protein sequence ID" value="AAH17316.2"/>
    <property type="status" value="ALT_SEQ"/>
    <property type="molecule type" value="mRNA"/>
</dbReference>
<dbReference type="EMBL" id="AL137586">
    <property type="protein sequence ID" value="CAB70828.1"/>
    <property type="molecule type" value="mRNA"/>
</dbReference>
<dbReference type="CCDS" id="CCDS44971.2">
    <molecule id="Q9UJX3-2"/>
</dbReference>
<dbReference type="CCDS" id="CCDS9145.3">
    <molecule id="Q9UJX3-1"/>
</dbReference>
<dbReference type="PIR" id="T46297">
    <property type="entry name" value="T46297"/>
</dbReference>
<dbReference type="RefSeq" id="NP_001131136.2">
    <molecule id="Q9UJX3-2"/>
    <property type="nucleotide sequence ID" value="NM_001137664.2"/>
</dbReference>
<dbReference type="RefSeq" id="NP_057322.3">
    <molecule id="Q9UJX3-1"/>
    <property type="nucleotide sequence ID" value="NM_016238.3"/>
</dbReference>
<dbReference type="PDB" id="3FFL">
    <property type="method" value="X-ray"/>
    <property type="resolution" value="2.50 A"/>
    <property type="chains" value="A/B/C/D=1-147"/>
</dbReference>
<dbReference type="PDB" id="4UI9">
    <property type="method" value="EM"/>
    <property type="resolution" value="3.60 A"/>
    <property type="chains" value="X/Y=1-506"/>
</dbReference>
<dbReference type="PDB" id="5A31">
    <property type="method" value="EM"/>
    <property type="resolution" value="4.30 A"/>
    <property type="chains" value="X/Y=1-506"/>
</dbReference>
<dbReference type="PDB" id="5G04">
    <property type="method" value="EM"/>
    <property type="resolution" value="4.00 A"/>
    <property type="chains" value="X/Y=1-506"/>
</dbReference>
<dbReference type="PDB" id="5G05">
    <property type="method" value="EM"/>
    <property type="resolution" value="3.40 A"/>
    <property type="chains" value="X/Y=1-506"/>
</dbReference>
<dbReference type="PDB" id="5KHR">
    <property type="method" value="EM"/>
    <property type="resolution" value="6.10 A"/>
    <property type="chains" value="X/Y=1-565"/>
</dbReference>
<dbReference type="PDB" id="5KHU">
    <property type="method" value="EM"/>
    <property type="resolution" value="4.80 A"/>
    <property type="chains" value="X/Y=1-565"/>
</dbReference>
<dbReference type="PDB" id="5L9T">
    <property type="method" value="EM"/>
    <property type="resolution" value="6.40 A"/>
    <property type="chains" value="X/Y=1-565"/>
</dbReference>
<dbReference type="PDB" id="5L9U">
    <property type="method" value="EM"/>
    <property type="resolution" value="6.40 A"/>
    <property type="chains" value="X/Y=1-565"/>
</dbReference>
<dbReference type="PDB" id="5LCW">
    <property type="method" value="EM"/>
    <property type="resolution" value="4.00 A"/>
    <property type="chains" value="X/Y=1-506"/>
</dbReference>
<dbReference type="PDB" id="6Q6G">
    <property type="method" value="EM"/>
    <property type="resolution" value="3.20 A"/>
    <property type="chains" value="Y/Z=1-521"/>
</dbReference>
<dbReference type="PDB" id="6Q6H">
    <property type="method" value="EM"/>
    <property type="resolution" value="3.20 A"/>
    <property type="chains" value="Y/Z=1-521"/>
</dbReference>
<dbReference type="PDB" id="6TLJ">
    <property type="method" value="EM"/>
    <property type="resolution" value="3.80 A"/>
    <property type="chains" value="X/Y=1-506"/>
</dbReference>
<dbReference type="PDB" id="6TM5">
    <property type="method" value="EM"/>
    <property type="resolution" value="3.90 A"/>
    <property type="chains" value="X/Y=1-506"/>
</dbReference>
<dbReference type="PDB" id="6TNT">
    <property type="method" value="EM"/>
    <property type="resolution" value="3.78 A"/>
    <property type="chains" value="X/Y=1-506"/>
</dbReference>
<dbReference type="PDB" id="8PKP">
    <property type="method" value="EM"/>
    <property type="resolution" value="3.20 A"/>
    <property type="chains" value="Y/Z=1-565"/>
</dbReference>
<dbReference type="PDB" id="8TAR">
    <property type="method" value="EM"/>
    <property type="resolution" value="4.00 A"/>
    <property type="chains" value="Y/Z=1-565"/>
</dbReference>
<dbReference type="PDB" id="8TAU">
    <property type="method" value="EM"/>
    <property type="resolution" value="3.50 A"/>
    <property type="chains" value="Y/Z=1-565"/>
</dbReference>
<dbReference type="PDB" id="9GAW">
    <property type="method" value="EM"/>
    <property type="resolution" value="2.90 A"/>
    <property type="chains" value="Y/Z=1-565"/>
</dbReference>
<dbReference type="PDBsum" id="3FFL"/>
<dbReference type="PDBsum" id="4UI9"/>
<dbReference type="PDBsum" id="5A31"/>
<dbReference type="PDBsum" id="5G04"/>
<dbReference type="PDBsum" id="5G05"/>
<dbReference type="PDBsum" id="5KHR"/>
<dbReference type="PDBsum" id="5KHU"/>
<dbReference type="PDBsum" id="5L9T"/>
<dbReference type="PDBsum" id="5L9U"/>
<dbReference type="PDBsum" id="5LCW"/>
<dbReference type="PDBsum" id="6Q6G"/>
<dbReference type="PDBsum" id="6Q6H"/>
<dbReference type="PDBsum" id="6TLJ"/>
<dbReference type="PDBsum" id="6TM5"/>
<dbReference type="PDBsum" id="6TNT"/>
<dbReference type="PDBsum" id="8PKP"/>
<dbReference type="PDBsum" id="8TAR"/>
<dbReference type="PDBsum" id="8TAU"/>
<dbReference type="PDBsum" id="9GAW"/>
<dbReference type="EMDB" id="EMD-10516"/>
<dbReference type="EMDB" id="EMD-10518"/>
<dbReference type="EMDB" id="EMD-10536"/>
<dbReference type="EMDB" id="EMD-13931"/>
<dbReference type="EMDB" id="EMD-17751"/>
<dbReference type="EMDB" id="EMD-19711"/>
<dbReference type="EMDB" id="EMD-2924"/>
<dbReference type="EMDB" id="EMD-2925"/>
<dbReference type="EMDB" id="EMD-3385"/>
<dbReference type="EMDB" id="EMD-3386"/>
<dbReference type="EMDB" id="EMD-3387"/>
<dbReference type="EMDB" id="EMD-3388"/>
<dbReference type="EMDB" id="EMD-3389"/>
<dbReference type="EMDB" id="EMD-3390"/>
<dbReference type="EMDB" id="EMD-4037"/>
<dbReference type="EMDB" id="EMD-41140"/>
<dbReference type="EMDB" id="EMD-41142"/>
<dbReference type="EMDB" id="EMD-4465"/>
<dbReference type="EMDB" id="EMD-4466"/>
<dbReference type="EMDB" id="EMD-51190"/>
<dbReference type="SMR" id="Q9UJX3"/>
<dbReference type="BioGRID" id="119538">
    <property type="interactions" value="204"/>
</dbReference>
<dbReference type="ComplexPortal" id="CPX-1860">
    <property type="entry name" value="Anaphase-promoting core complex"/>
</dbReference>
<dbReference type="CORUM" id="Q9UJX3"/>
<dbReference type="DIP" id="DIP-39765N"/>
<dbReference type="ELM" id="Q9UJX3"/>
<dbReference type="FunCoup" id="Q9UJX3">
    <property type="interactions" value="3060"/>
</dbReference>
<dbReference type="IntAct" id="Q9UJX3">
    <property type="interactions" value="63"/>
</dbReference>
<dbReference type="MINT" id="Q9UJX3"/>
<dbReference type="STRING" id="9606.ENSP00000394394"/>
<dbReference type="GlyGen" id="Q9UJX3">
    <property type="glycosylation" value="2 sites, 1 O-linked glycan (1 site)"/>
</dbReference>
<dbReference type="iPTMnet" id="Q9UJX3"/>
<dbReference type="PhosphoSitePlus" id="Q9UJX3"/>
<dbReference type="SwissPalm" id="Q9UJX3"/>
<dbReference type="BioMuta" id="ANAPC7"/>
<dbReference type="DMDM" id="294862527"/>
<dbReference type="jPOST" id="Q9UJX3"/>
<dbReference type="MassIVE" id="Q9UJX3"/>
<dbReference type="PaxDb" id="9606-ENSP00000394394"/>
<dbReference type="PeptideAtlas" id="Q9UJX3"/>
<dbReference type="ProteomicsDB" id="84682">
    <molecule id="Q9UJX3-1"/>
</dbReference>
<dbReference type="ProteomicsDB" id="84683">
    <molecule id="Q9UJX3-2"/>
</dbReference>
<dbReference type="Pumba" id="Q9UJX3"/>
<dbReference type="TopDownProteomics" id="Q9UJX3-2">
    <molecule id="Q9UJX3-2"/>
</dbReference>
<dbReference type="Antibodypedia" id="4033">
    <property type="antibodies" value="99 antibodies from 27 providers"/>
</dbReference>
<dbReference type="DNASU" id="51434"/>
<dbReference type="Ensembl" id="ENST00000450008.3">
    <molecule id="Q9UJX3-2"/>
    <property type="protein sequence ID" value="ENSP00000402314.3"/>
    <property type="gene ID" value="ENSG00000196510.14"/>
</dbReference>
<dbReference type="Ensembl" id="ENST00000455511.9">
    <molecule id="Q9UJX3-1"/>
    <property type="protein sequence ID" value="ENSP00000394394.4"/>
    <property type="gene ID" value="ENSG00000196510.14"/>
</dbReference>
<dbReference type="GeneID" id="51434"/>
<dbReference type="MANE-Select" id="ENST00000455511.9">
    <property type="protein sequence ID" value="ENSP00000394394.4"/>
    <property type="RefSeq nucleotide sequence ID" value="NM_016238.3"/>
    <property type="RefSeq protein sequence ID" value="NP_057322.3"/>
</dbReference>
<dbReference type="UCSC" id="uc001tqo.2">
    <molecule id="Q9UJX3-1"/>
    <property type="organism name" value="human"/>
</dbReference>
<dbReference type="AGR" id="HGNC:17380"/>
<dbReference type="DisGeNET" id="51434"/>
<dbReference type="GeneCards" id="ANAPC7"/>
<dbReference type="HGNC" id="HGNC:17380">
    <property type="gene designation" value="ANAPC7"/>
</dbReference>
<dbReference type="HPA" id="ENSG00000196510">
    <property type="expression patterns" value="Low tissue specificity"/>
</dbReference>
<dbReference type="MalaCards" id="ANAPC7"/>
<dbReference type="MIM" id="606949">
    <property type="type" value="gene"/>
</dbReference>
<dbReference type="MIM" id="619699">
    <property type="type" value="phenotype"/>
</dbReference>
<dbReference type="neXtProt" id="NX_Q9UJX3"/>
<dbReference type="OpenTargets" id="ENSG00000196510"/>
<dbReference type="PharmGKB" id="PA134901290"/>
<dbReference type="VEuPathDB" id="HostDB:ENSG00000196510"/>
<dbReference type="eggNOG" id="KOG1174">
    <property type="taxonomic scope" value="Eukaryota"/>
</dbReference>
<dbReference type="GeneTree" id="ENSGT00950000182950"/>
<dbReference type="HOGENOM" id="CLU_026953_2_0_1"/>
<dbReference type="InParanoid" id="Q9UJX3"/>
<dbReference type="OrthoDB" id="308440at2759"/>
<dbReference type="PAN-GO" id="Q9UJX3">
    <property type="GO annotations" value="7 GO annotations based on evolutionary models"/>
</dbReference>
<dbReference type="PhylomeDB" id="Q9UJX3"/>
<dbReference type="TreeFam" id="TF105445"/>
<dbReference type="PathwayCommons" id="Q9UJX3"/>
<dbReference type="Reactome" id="R-HSA-141430">
    <property type="pathway name" value="Inactivation of APC/C via direct inhibition of the APC/C complex"/>
</dbReference>
<dbReference type="Reactome" id="R-HSA-174048">
    <property type="pathway name" value="APC/C:Cdc20 mediated degradation of Cyclin B"/>
</dbReference>
<dbReference type="Reactome" id="R-HSA-174084">
    <property type="pathway name" value="Autodegradation of Cdh1 by Cdh1:APC/C"/>
</dbReference>
<dbReference type="Reactome" id="R-HSA-174154">
    <property type="pathway name" value="APC/C:Cdc20 mediated degradation of Securin"/>
</dbReference>
<dbReference type="Reactome" id="R-HSA-174178">
    <property type="pathway name" value="APC/C:Cdh1 mediated degradation of Cdc20 and other APC/C:Cdh1 targeted proteins in late mitosis/early G1"/>
</dbReference>
<dbReference type="Reactome" id="R-HSA-174184">
    <property type="pathway name" value="Cdc20:Phospho-APC/C mediated degradation of Cyclin A"/>
</dbReference>
<dbReference type="Reactome" id="R-HSA-176407">
    <property type="pathway name" value="Conversion from APC/C:Cdc20 to APC/C:Cdh1 in late anaphase"/>
</dbReference>
<dbReference type="Reactome" id="R-HSA-176408">
    <property type="pathway name" value="Regulation of APC/C activators between G1/S and early anaphase"/>
</dbReference>
<dbReference type="Reactome" id="R-HSA-176409">
    <property type="pathway name" value="APC/C:Cdc20 mediated degradation of mitotic proteins"/>
</dbReference>
<dbReference type="Reactome" id="R-HSA-176412">
    <property type="pathway name" value="Phosphorylation of the APC/C"/>
</dbReference>
<dbReference type="Reactome" id="R-HSA-179409">
    <property type="pathway name" value="APC-Cdc20 mediated degradation of Nek2A"/>
</dbReference>
<dbReference type="Reactome" id="R-HSA-2467813">
    <property type="pathway name" value="Separation of Sister Chromatids"/>
</dbReference>
<dbReference type="Reactome" id="R-HSA-2559582">
    <property type="pathway name" value="Senescence-Associated Secretory Phenotype (SASP)"/>
</dbReference>
<dbReference type="Reactome" id="R-HSA-68867">
    <property type="pathway name" value="Assembly of the pre-replicative complex"/>
</dbReference>
<dbReference type="Reactome" id="R-HSA-69017">
    <property type="pathway name" value="CDK-mediated phosphorylation and removal of Cdc6"/>
</dbReference>
<dbReference type="Reactome" id="R-HSA-8853884">
    <property type="pathway name" value="Transcriptional Regulation by VENTX"/>
</dbReference>
<dbReference type="Reactome" id="R-HSA-9687136">
    <property type="pathway name" value="Aberrant regulation of mitotic exit in cancer due to RB1 defects"/>
</dbReference>
<dbReference type="Reactome" id="R-HSA-983168">
    <property type="pathway name" value="Antigen processing: Ubiquitination &amp; Proteasome degradation"/>
</dbReference>
<dbReference type="SignaLink" id="Q9UJX3"/>
<dbReference type="SIGNOR" id="Q9UJX3"/>
<dbReference type="UniPathway" id="UPA00143"/>
<dbReference type="BioGRID-ORCS" id="51434">
    <property type="hits" value="24 hits in 1167 CRISPR screens"/>
</dbReference>
<dbReference type="ChiTaRS" id="ANAPC7">
    <property type="organism name" value="human"/>
</dbReference>
<dbReference type="EvolutionaryTrace" id="Q9UJX3"/>
<dbReference type="GeneWiki" id="ANAPC7"/>
<dbReference type="GenomeRNAi" id="51434"/>
<dbReference type="Pharos" id="Q9UJX3">
    <property type="development level" value="Tbio"/>
</dbReference>
<dbReference type="PRO" id="PR:Q9UJX3"/>
<dbReference type="Proteomes" id="UP000005640">
    <property type="component" value="Chromosome 12"/>
</dbReference>
<dbReference type="RNAct" id="Q9UJX3">
    <property type="molecule type" value="protein"/>
</dbReference>
<dbReference type="Bgee" id="ENSG00000196510">
    <property type="expression patterns" value="Expressed in pancreatic ductal cell and 186 other cell types or tissues"/>
</dbReference>
<dbReference type="ExpressionAtlas" id="Q9UJX3">
    <property type="expression patterns" value="baseline and differential"/>
</dbReference>
<dbReference type="GO" id="GO:0005680">
    <property type="term" value="C:anaphase-promoting complex"/>
    <property type="evidence" value="ECO:0000314"/>
    <property type="project" value="UniProtKB"/>
</dbReference>
<dbReference type="GO" id="GO:0005829">
    <property type="term" value="C:cytosol"/>
    <property type="evidence" value="ECO:0000304"/>
    <property type="project" value="Reactome"/>
</dbReference>
<dbReference type="GO" id="GO:0000792">
    <property type="term" value="C:heterochromatin"/>
    <property type="evidence" value="ECO:0000315"/>
    <property type="project" value="UniProtKB"/>
</dbReference>
<dbReference type="GO" id="GO:0045171">
    <property type="term" value="C:intercellular bridge"/>
    <property type="evidence" value="ECO:0000314"/>
    <property type="project" value="HPA"/>
</dbReference>
<dbReference type="GO" id="GO:0043231">
    <property type="term" value="C:intracellular membrane-bounded organelle"/>
    <property type="evidence" value="ECO:0000314"/>
    <property type="project" value="HPA"/>
</dbReference>
<dbReference type="GO" id="GO:0015630">
    <property type="term" value="C:microtubule cytoskeleton"/>
    <property type="evidence" value="ECO:0000314"/>
    <property type="project" value="HPA"/>
</dbReference>
<dbReference type="GO" id="GO:0072686">
    <property type="term" value="C:mitotic spindle"/>
    <property type="evidence" value="ECO:0000314"/>
    <property type="project" value="HPA"/>
</dbReference>
<dbReference type="GO" id="GO:0005654">
    <property type="term" value="C:nucleoplasm"/>
    <property type="evidence" value="ECO:0000314"/>
    <property type="project" value="HPA"/>
</dbReference>
<dbReference type="GO" id="GO:0005634">
    <property type="term" value="C:nucleus"/>
    <property type="evidence" value="ECO:0000314"/>
    <property type="project" value="UniProtKB"/>
</dbReference>
<dbReference type="GO" id="GO:0005819">
    <property type="term" value="C:spindle"/>
    <property type="evidence" value="ECO:0000314"/>
    <property type="project" value="UniProtKB"/>
</dbReference>
<dbReference type="GO" id="GO:0140767">
    <property type="term" value="F:enzyme-substrate adaptor activity"/>
    <property type="evidence" value="ECO:0000314"/>
    <property type="project" value="UniProtKB"/>
</dbReference>
<dbReference type="GO" id="GO:0019903">
    <property type="term" value="F:protein phosphatase binding"/>
    <property type="evidence" value="ECO:0000353"/>
    <property type="project" value="BHF-UCL"/>
</dbReference>
<dbReference type="GO" id="GO:0031145">
    <property type="term" value="P:anaphase-promoting complex-dependent catabolic process"/>
    <property type="evidence" value="ECO:0000314"/>
    <property type="project" value="UniProtKB"/>
</dbReference>
<dbReference type="GO" id="GO:0007420">
    <property type="term" value="P:brain development"/>
    <property type="evidence" value="ECO:0000315"/>
    <property type="project" value="UniProtKB"/>
</dbReference>
<dbReference type="GO" id="GO:0051301">
    <property type="term" value="P:cell division"/>
    <property type="evidence" value="ECO:0000318"/>
    <property type="project" value="GO_Central"/>
</dbReference>
<dbReference type="GO" id="GO:0045842">
    <property type="term" value="P:positive regulation of mitotic metaphase/anaphase transition"/>
    <property type="evidence" value="ECO:0000318"/>
    <property type="project" value="GO_Central"/>
</dbReference>
<dbReference type="GO" id="GO:0141198">
    <property type="term" value="P:protein branched polyubiquitination"/>
    <property type="evidence" value="ECO:0000314"/>
    <property type="project" value="UniProtKB"/>
</dbReference>
<dbReference type="GO" id="GO:0070979">
    <property type="term" value="P:protein K11-linked ubiquitination"/>
    <property type="evidence" value="ECO:0000314"/>
    <property type="project" value="UniProtKB"/>
</dbReference>
<dbReference type="GO" id="GO:0070936">
    <property type="term" value="P:protein K48-linked ubiquitination"/>
    <property type="evidence" value="ECO:0000314"/>
    <property type="project" value="UniProtKB"/>
</dbReference>
<dbReference type="GO" id="GO:0016567">
    <property type="term" value="P:protein ubiquitination"/>
    <property type="evidence" value="ECO:0000315"/>
    <property type="project" value="UniProtKB"/>
</dbReference>
<dbReference type="GO" id="GO:0051445">
    <property type="term" value="P:regulation of meiotic cell cycle"/>
    <property type="evidence" value="ECO:0000303"/>
    <property type="project" value="ComplexPortal"/>
</dbReference>
<dbReference type="GO" id="GO:0007346">
    <property type="term" value="P:regulation of mitotic cell cycle"/>
    <property type="evidence" value="ECO:0000303"/>
    <property type="project" value="ComplexPortal"/>
</dbReference>
<dbReference type="DisProt" id="DP01479"/>
<dbReference type="FunFam" id="1.25.40.10:FF:000068">
    <property type="entry name" value="Anaphase promoting complex subunit 7"/>
    <property type="match status" value="1"/>
</dbReference>
<dbReference type="FunFam" id="1.25.40.10:FF:000126">
    <property type="entry name" value="Anaphase promoting complex subunit 7"/>
    <property type="match status" value="1"/>
</dbReference>
<dbReference type="FunFam" id="1.25.40.10:FF:000178">
    <property type="entry name" value="Anaphase promoting complex subunit 7"/>
    <property type="match status" value="1"/>
</dbReference>
<dbReference type="FunFam" id="1.25.40.10:FF:000238">
    <property type="entry name" value="Anaphase promoting complex subunit 7"/>
    <property type="match status" value="1"/>
</dbReference>
<dbReference type="Gene3D" id="1.25.40.10">
    <property type="entry name" value="Tetratricopeptide repeat domain"/>
    <property type="match status" value="4"/>
</dbReference>
<dbReference type="InterPro" id="IPR011990">
    <property type="entry name" value="TPR-like_helical_dom_sf"/>
</dbReference>
<dbReference type="InterPro" id="IPR019734">
    <property type="entry name" value="TPR_rpt"/>
</dbReference>
<dbReference type="PANTHER" id="PTHR12558:SF36">
    <property type="entry name" value="ANAPHASE-PROMOTING COMPLEX SUBUNIT 7"/>
    <property type="match status" value="1"/>
</dbReference>
<dbReference type="PANTHER" id="PTHR12558">
    <property type="entry name" value="CELL DIVISION CYCLE 16,23,27"/>
    <property type="match status" value="1"/>
</dbReference>
<dbReference type="Pfam" id="PF13432">
    <property type="entry name" value="TPR_16"/>
    <property type="match status" value="1"/>
</dbReference>
<dbReference type="Pfam" id="PF13181">
    <property type="entry name" value="TPR_8"/>
    <property type="match status" value="1"/>
</dbReference>
<dbReference type="SMART" id="SM00028">
    <property type="entry name" value="TPR"/>
    <property type="match status" value="5"/>
</dbReference>
<dbReference type="SUPFAM" id="SSF48452">
    <property type="entry name" value="TPR-like"/>
    <property type="match status" value="3"/>
</dbReference>
<dbReference type="PROSITE" id="PS50005">
    <property type="entry name" value="TPR"/>
    <property type="match status" value="5"/>
</dbReference>
<dbReference type="PROSITE" id="PS50293">
    <property type="entry name" value="TPR_REGION"/>
    <property type="match status" value="1"/>
</dbReference>
<protein>
    <recommendedName>
        <fullName evidence="12">Anaphase-promoting complex subunit 7</fullName>
        <shortName>APC7</shortName>
    </recommendedName>
    <alternativeName>
        <fullName>Cyclosome subunit 7</fullName>
    </alternativeName>
</protein>